<protein>
    <recommendedName>
        <fullName evidence="1">NAD(P)H-quinone oxidoreductase subunit K, chloroplastic</fullName>
        <ecNumber evidence="1">7.1.1.-</ecNumber>
    </recommendedName>
    <alternativeName>
        <fullName evidence="1">NAD(P)H dehydrogenase subunit K</fullName>
    </alternativeName>
    <alternativeName>
        <fullName evidence="1">NADH-plastoquinone oxidoreductase subunit K</fullName>
    </alternativeName>
</protein>
<proteinExistence type="inferred from homology"/>
<feature type="chain" id="PRO_0000358518" description="NAD(P)H-quinone oxidoreductase subunit K, chloroplastic">
    <location>
        <begin position="1"/>
        <end position="225"/>
    </location>
</feature>
<feature type="binding site" evidence="1">
    <location>
        <position position="43"/>
    </location>
    <ligand>
        <name>[4Fe-4S] cluster</name>
        <dbReference type="ChEBI" id="CHEBI:49883"/>
    </ligand>
</feature>
<feature type="binding site" evidence="1">
    <location>
        <position position="44"/>
    </location>
    <ligand>
        <name>[4Fe-4S] cluster</name>
        <dbReference type="ChEBI" id="CHEBI:49883"/>
    </ligand>
</feature>
<feature type="binding site" evidence="1">
    <location>
        <position position="108"/>
    </location>
    <ligand>
        <name>[4Fe-4S] cluster</name>
        <dbReference type="ChEBI" id="CHEBI:49883"/>
    </ligand>
</feature>
<feature type="binding site" evidence="1">
    <location>
        <position position="139"/>
    </location>
    <ligand>
        <name>[4Fe-4S] cluster</name>
        <dbReference type="ChEBI" id="CHEBI:49883"/>
    </ligand>
</feature>
<comment type="function">
    <text evidence="1">NDH shuttles electrons from NAD(P)H:plastoquinone, via FMN and iron-sulfur (Fe-S) centers, to quinones in the photosynthetic chain and possibly in a chloroplast respiratory chain. The immediate electron acceptor for the enzyme in this species is believed to be plastoquinone. Couples the redox reaction to proton translocation, and thus conserves the redox energy in a proton gradient.</text>
</comment>
<comment type="catalytic activity">
    <reaction evidence="1">
        <text>a plastoquinone + NADH + (n+1) H(+)(in) = a plastoquinol + NAD(+) + n H(+)(out)</text>
        <dbReference type="Rhea" id="RHEA:42608"/>
        <dbReference type="Rhea" id="RHEA-COMP:9561"/>
        <dbReference type="Rhea" id="RHEA-COMP:9562"/>
        <dbReference type="ChEBI" id="CHEBI:15378"/>
        <dbReference type="ChEBI" id="CHEBI:17757"/>
        <dbReference type="ChEBI" id="CHEBI:57540"/>
        <dbReference type="ChEBI" id="CHEBI:57945"/>
        <dbReference type="ChEBI" id="CHEBI:62192"/>
    </reaction>
</comment>
<comment type="catalytic activity">
    <reaction evidence="1">
        <text>a plastoquinone + NADPH + (n+1) H(+)(in) = a plastoquinol + NADP(+) + n H(+)(out)</text>
        <dbReference type="Rhea" id="RHEA:42612"/>
        <dbReference type="Rhea" id="RHEA-COMP:9561"/>
        <dbReference type="Rhea" id="RHEA-COMP:9562"/>
        <dbReference type="ChEBI" id="CHEBI:15378"/>
        <dbReference type="ChEBI" id="CHEBI:17757"/>
        <dbReference type="ChEBI" id="CHEBI:57783"/>
        <dbReference type="ChEBI" id="CHEBI:58349"/>
        <dbReference type="ChEBI" id="CHEBI:62192"/>
    </reaction>
</comment>
<comment type="cofactor">
    <cofactor evidence="1">
        <name>[4Fe-4S] cluster</name>
        <dbReference type="ChEBI" id="CHEBI:49883"/>
    </cofactor>
    <text evidence="1">Binds 1 [4Fe-4S] cluster.</text>
</comment>
<comment type="subunit">
    <text evidence="1">NDH is composed of at least 16 different subunits, 5 of which are encoded in the nucleus.</text>
</comment>
<comment type="subcellular location">
    <subcellularLocation>
        <location evidence="1">Plastid</location>
        <location evidence="1">Chloroplast thylakoid membrane</location>
        <topology evidence="1">Peripheral membrane protein</topology>
        <orientation evidence="1">Stromal side</orientation>
    </subcellularLocation>
</comment>
<comment type="similarity">
    <text evidence="1">Belongs to the complex I 20 kDa subunit family.</text>
</comment>
<comment type="sequence caution" evidence="2">
    <conflict type="erroneous initiation">
        <sequence resource="EMBL-CDS" id="CAD45111"/>
    </conflict>
</comment>
<organism>
    <name type="scientific">Amborella trichopoda</name>
    <dbReference type="NCBI Taxonomy" id="13333"/>
    <lineage>
        <taxon>Eukaryota</taxon>
        <taxon>Viridiplantae</taxon>
        <taxon>Streptophyta</taxon>
        <taxon>Embryophyta</taxon>
        <taxon>Tracheophyta</taxon>
        <taxon>Spermatophyta</taxon>
        <taxon>Magnoliopsida</taxon>
        <taxon>Amborellales</taxon>
        <taxon>Amborellaceae</taxon>
        <taxon>Amborella</taxon>
    </lineage>
</organism>
<evidence type="ECO:0000255" key="1">
    <source>
        <dbReference type="HAMAP-Rule" id="MF_01356"/>
    </source>
</evidence>
<evidence type="ECO:0000305" key="2"/>
<keyword id="KW-0004">4Fe-4S</keyword>
<keyword id="KW-0150">Chloroplast</keyword>
<keyword id="KW-0408">Iron</keyword>
<keyword id="KW-0411">Iron-sulfur</keyword>
<keyword id="KW-0472">Membrane</keyword>
<keyword id="KW-0479">Metal-binding</keyword>
<keyword id="KW-0520">NAD</keyword>
<keyword id="KW-0521">NADP</keyword>
<keyword id="KW-0934">Plastid</keyword>
<keyword id="KW-0618">Plastoquinone</keyword>
<keyword id="KW-0874">Quinone</keyword>
<keyword id="KW-1185">Reference proteome</keyword>
<keyword id="KW-0793">Thylakoid</keyword>
<keyword id="KW-1278">Translocase</keyword>
<keyword id="KW-0813">Transport</keyword>
<accession>Q70XZ9</accession>
<reference key="1">
    <citation type="journal article" date="2003" name="Mol. Biol. Evol.">
        <title>Analysis of the Amborella trichopoda chloroplast genome sequence suggests that Amborella is not a basal angiosperm.</title>
        <authorList>
            <person name="Goremykin V.V."/>
            <person name="Hirsch-Ernst K.I."/>
            <person name="Wolfl S."/>
            <person name="Hellwig F.H."/>
        </authorList>
    </citation>
    <scope>NUCLEOTIDE SEQUENCE [LARGE SCALE GENOMIC DNA]</scope>
</reference>
<geneLocation type="chloroplast"/>
<dbReference type="EC" id="7.1.1.-" evidence="1"/>
<dbReference type="EMBL" id="AJ506156">
    <property type="protein sequence ID" value="CAD45111.1"/>
    <property type="status" value="ALT_INIT"/>
    <property type="molecule type" value="Genomic_DNA"/>
</dbReference>
<dbReference type="RefSeq" id="NP_904103.3">
    <property type="nucleotide sequence ID" value="NC_005086.1"/>
</dbReference>
<dbReference type="SMR" id="Q70XZ9"/>
<dbReference type="STRING" id="13333.Q70XZ9"/>
<dbReference type="GeneID" id="2546615"/>
<dbReference type="KEGG" id="atr:2546615"/>
<dbReference type="eggNOG" id="KOG1687">
    <property type="taxonomic scope" value="Eukaryota"/>
</dbReference>
<dbReference type="eggNOG" id="KOG1713">
    <property type="taxonomic scope" value="Eukaryota"/>
</dbReference>
<dbReference type="OrthoDB" id="1889813at2759"/>
<dbReference type="Proteomes" id="UP000017836">
    <property type="component" value="Chloroplast"/>
</dbReference>
<dbReference type="GO" id="GO:0009535">
    <property type="term" value="C:chloroplast thylakoid membrane"/>
    <property type="evidence" value="ECO:0007669"/>
    <property type="project" value="UniProtKB-SubCell"/>
</dbReference>
<dbReference type="GO" id="GO:0045271">
    <property type="term" value="C:respiratory chain complex I"/>
    <property type="evidence" value="ECO:0000318"/>
    <property type="project" value="GO_Central"/>
</dbReference>
<dbReference type="GO" id="GO:0051539">
    <property type="term" value="F:4 iron, 4 sulfur cluster binding"/>
    <property type="evidence" value="ECO:0007669"/>
    <property type="project" value="UniProtKB-KW"/>
</dbReference>
<dbReference type="GO" id="GO:0005506">
    <property type="term" value="F:iron ion binding"/>
    <property type="evidence" value="ECO:0007669"/>
    <property type="project" value="UniProtKB-UniRule"/>
</dbReference>
<dbReference type="GO" id="GO:0008137">
    <property type="term" value="F:NADH dehydrogenase (ubiquinone) activity"/>
    <property type="evidence" value="ECO:0000318"/>
    <property type="project" value="GO_Central"/>
</dbReference>
<dbReference type="GO" id="GO:0048038">
    <property type="term" value="F:quinone binding"/>
    <property type="evidence" value="ECO:0007669"/>
    <property type="project" value="UniProtKB-KW"/>
</dbReference>
<dbReference type="GO" id="GO:0009060">
    <property type="term" value="P:aerobic respiration"/>
    <property type="evidence" value="ECO:0000318"/>
    <property type="project" value="GO_Central"/>
</dbReference>
<dbReference type="GO" id="GO:0015990">
    <property type="term" value="P:electron transport coupled proton transport"/>
    <property type="evidence" value="ECO:0000318"/>
    <property type="project" value="GO_Central"/>
</dbReference>
<dbReference type="GO" id="GO:0019684">
    <property type="term" value="P:photosynthesis, light reaction"/>
    <property type="evidence" value="ECO:0007669"/>
    <property type="project" value="UniProtKB-UniRule"/>
</dbReference>
<dbReference type="FunFam" id="3.40.50.12280:FF:000003">
    <property type="entry name" value="NAD(P)H-quinone oxidoreductase subunit K, chloroplastic"/>
    <property type="match status" value="1"/>
</dbReference>
<dbReference type="Gene3D" id="3.40.50.12280">
    <property type="match status" value="1"/>
</dbReference>
<dbReference type="HAMAP" id="MF_01356">
    <property type="entry name" value="NDH1_NuoB"/>
    <property type="match status" value="1"/>
</dbReference>
<dbReference type="InterPro" id="IPR006137">
    <property type="entry name" value="NADH_UbQ_OxRdtase-like_20kDa"/>
</dbReference>
<dbReference type="InterPro" id="IPR006138">
    <property type="entry name" value="NADH_UQ_OxRdtase_20Kd_su"/>
</dbReference>
<dbReference type="NCBIfam" id="TIGR01957">
    <property type="entry name" value="nuoB_fam"/>
    <property type="match status" value="1"/>
</dbReference>
<dbReference type="NCBIfam" id="NF005012">
    <property type="entry name" value="PRK06411.1"/>
    <property type="match status" value="1"/>
</dbReference>
<dbReference type="PANTHER" id="PTHR11995">
    <property type="entry name" value="NADH DEHYDROGENASE"/>
    <property type="match status" value="1"/>
</dbReference>
<dbReference type="PANTHER" id="PTHR11995:SF14">
    <property type="entry name" value="NADH DEHYDROGENASE [UBIQUINONE] IRON-SULFUR PROTEIN 7, MITOCHONDRIAL"/>
    <property type="match status" value="1"/>
</dbReference>
<dbReference type="Pfam" id="PF01058">
    <property type="entry name" value="Oxidored_q6"/>
    <property type="match status" value="1"/>
</dbReference>
<dbReference type="SUPFAM" id="SSF56770">
    <property type="entry name" value="HydA/Nqo6-like"/>
    <property type="match status" value="1"/>
</dbReference>
<dbReference type="PROSITE" id="PS01150">
    <property type="entry name" value="COMPLEX1_20K"/>
    <property type="match status" value="1"/>
</dbReference>
<gene>
    <name evidence="1" type="primary">ndhK</name>
</gene>
<name>NDHK_AMBTC</name>
<sequence>MNSMEFPLLDRTTPNSVISTTPNDLSNWSRLSSLWPLLYGTSCCFIEFASLIGSRFDFDRYGLVPRSSPRQADLILTAGTVTMKMAPSLVRLYEQMPEPKYVIAMGACTITGGMFSTDSYSTVRGVDKLIPVDVYLPGCPPKPEAIIDAITKLRKKVSREIYEDRIASQQEDRCFTTNHKFRVGRSIHTGNYDQELLYQSPSTSEILSETLFKYKSSLSSHELVN</sequence>